<organism>
    <name type="scientific">Mycobacterium tuberculosis (strain CDC 1551 / Oshkosh)</name>
    <dbReference type="NCBI Taxonomy" id="83331"/>
    <lineage>
        <taxon>Bacteria</taxon>
        <taxon>Bacillati</taxon>
        <taxon>Actinomycetota</taxon>
        <taxon>Actinomycetes</taxon>
        <taxon>Mycobacteriales</taxon>
        <taxon>Mycobacteriaceae</taxon>
        <taxon>Mycobacterium</taxon>
        <taxon>Mycobacterium tuberculosis complex</taxon>
    </lineage>
</organism>
<comment type="function">
    <text evidence="2">One of the primary rRNA binding proteins, it binds directly to 16S rRNA where it nucleates assembly of the head domain of the 30S subunit. Is located at the subunit interface close to the decoding center, probably blocks exit of the E-site tRNA.</text>
</comment>
<comment type="subunit">
    <text evidence="2">Part of the 30S ribosomal subunit. Contacts proteins S9 and S11.</text>
</comment>
<comment type="similarity">
    <text evidence="2">Belongs to the universal ribosomal protein uS7 family.</text>
</comment>
<evidence type="ECO:0000250" key="1"/>
<evidence type="ECO:0000255" key="2">
    <source>
        <dbReference type="HAMAP-Rule" id="MF_00480"/>
    </source>
</evidence>
<evidence type="ECO:0000305" key="3"/>
<proteinExistence type="inferred from homology"/>
<keyword id="KW-1185">Reference proteome</keyword>
<keyword id="KW-0687">Ribonucleoprotein</keyword>
<keyword id="KW-0689">Ribosomal protein</keyword>
<keyword id="KW-0694">RNA-binding</keyword>
<keyword id="KW-0699">rRNA-binding</keyword>
<keyword id="KW-0820">tRNA-binding</keyword>
<protein>
    <recommendedName>
        <fullName evidence="2">Small ribosomal subunit protein uS7</fullName>
    </recommendedName>
    <alternativeName>
        <fullName evidence="3">30S ribosomal protein S7</fullName>
    </alternativeName>
</protein>
<accession>P9WH28</accession>
<accession>L0T4J5</accession>
<accession>P41194</accession>
<name>RS7_MYCTO</name>
<feature type="initiator methionine" description="Removed" evidence="1">
    <location>
        <position position="1"/>
    </location>
</feature>
<feature type="chain" id="PRO_0000428259" description="Small ribosomal subunit protein uS7">
    <location>
        <begin position="2"/>
        <end position="156"/>
    </location>
</feature>
<dbReference type="EMBL" id="AE000516">
    <property type="protein sequence ID" value="AAK44937.1"/>
    <property type="molecule type" value="Genomic_DNA"/>
</dbReference>
<dbReference type="PIR" id="D70827">
    <property type="entry name" value="D70827"/>
</dbReference>
<dbReference type="RefSeq" id="WP_003917330.1">
    <property type="nucleotide sequence ID" value="NZ_KK341227.1"/>
</dbReference>
<dbReference type="SMR" id="P9WH28"/>
<dbReference type="KEGG" id="mtc:MT0711"/>
<dbReference type="PATRIC" id="fig|83331.31.peg.759"/>
<dbReference type="HOGENOM" id="CLU_072226_1_1_11"/>
<dbReference type="Proteomes" id="UP000001020">
    <property type="component" value="Chromosome"/>
</dbReference>
<dbReference type="GO" id="GO:0015935">
    <property type="term" value="C:small ribosomal subunit"/>
    <property type="evidence" value="ECO:0007669"/>
    <property type="project" value="InterPro"/>
</dbReference>
<dbReference type="GO" id="GO:0019843">
    <property type="term" value="F:rRNA binding"/>
    <property type="evidence" value="ECO:0007669"/>
    <property type="project" value="UniProtKB-UniRule"/>
</dbReference>
<dbReference type="GO" id="GO:0003735">
    <property type="term" value="F:structural constituent of ribosome"/>
    <property type="evidence" value="ECO:0007669"/>
    <property type="project" value="InterPro"/>
</dbReference>
<dbReference type="GO" id="GO:0000049">
    <property type="term" value="F:tRNA binding"/>
    <property type="evidence" value="ECO:0007669"/>
    <property type="project" value="UniProtKB-UniRule"/>
</dbReference>
<dbReference type="GO" id="GO:0006412">
    <property type="term" value="P:translation"/>
    <property type="evidence" value="ECO:0007669"/>
    <property type="project" value="UniProtKB-UniRule"/>
</dbReference>
<dbReference type="CDD" id="cd14869">
    <property type="entry name" value="uS7_Bacteria"/>
    <property type="match status" value="1"/>
</dbReference>
<dbReference type="FunFam" id="1.10.455.10:FF:000001">
    <property type="entry name" value="30S ribosomal protein S7"/>
    <property type="match status" value="1"/>
</dbReference>
<dbReference type="Gene3D" id="1.10.455.10">
    <property type="entry name" value="Ribosomal protein S7 domain"/>
    <property type="match status" value="1"/>
</dbReference>
<dbReference type="HAMAP" id="MF_00480_B">
    <property type="entry name" value="Ribosomal_uS7_B"/>
    <property type="match status" value="1"/>
</dbReference>
<dbReference type="InterPro" id="IPR000235">
    <property type="entry name" value="Ribosomal_uS7"/>
</dbReference>
<dbReference type="InterPro" id="IPR005717">
    <property type="entry name" value="Ribosomal_uS7_bac/org-type"/>
</dbReference>
<dbReference type="InterPro" id="IPR020606">
    <property type="entry name" value="Ribosomal_uS7_CS"/>
</dbReference>
<dbReference type="InterPro" id="IPR023798">
    <property type="entry name" value="Ribosomal_uS7_dom"/>
</dbReference>
<dbReference type="InterPro" id="IPR036823">
    <property type="entry name" value="Ribosomal_uS7_dom_sf"/>
</dbReference>
<dbReference type="NCBIfam" id="TIGR01029">
    <property type="entry name" value="rpsG_bact"/>
    <property type="match status" value="1"/>
</dbReference>
<dbReference type="PANTHER" id="PTHR11205">
    <property type="entry name" value="RIBOSOMAL PROTEIN S7"/>
    <property type="match status" value="1"/>
</dbReference>
<dbReference type="Pfam" id="PF00177">
    <property type="entry name" value="Ribosomal_S7"/>
    <property type="match status" value="1"/>
</dbReference>
<dbReference type="PIRSF" id="PIRSF002122">
    <property type="entry name" value="RPS7p_RPS7a_RPS5e_RPS7o"/>
    <property type="match status" value="1"/>
</dbReference>
<dbReference type="SUPFAM" id="SSF47973">
    <property type="entry name" value="Ribosomal protein S7"/>
    <property type="match status" value="1"/>
</dbReference>
<dbReference type="PROSITE" id="PS00052">
    <property type="entry name" value="RIBOSOMAL_S7"/>
    <property type="match status" value="1"/>
</dbReference>
<gene>
    <name evidence="2" type="primary">rpsG</name>
    <name evidence="2" type="synonym">rps7</name>
    <name type="ordered locus">MT0711</name>
</gene>
<reference key="1">
    <citation type="journal article" date="2002" name="J. Bacteriol.">
        <title>Whole-genome comparison of Mycobacterium tuberculosis clinical and laboratory strains.</title>
        <authorList>
            <person name="Fleischmann R.D."/>
            <person name="Alland D."/>
            <person name="Eisen J.A."/>
            <person name="Carpenter L."/>
            <person name="White O."/>
            <person name="Peterson J.D."/>
            <person name="DeBoy R.T."/>
            <person name="Dodson R.J."/>
            <person name="Gwinn M.L."/>
            <person name="Haft D.H."/>
            <person name="Hickey E.K."/>
            <person name="Kolonay J.F."/>
            <person name="Nelson W.C."/>
            <person name="Umayam L.A."/>
            <person name="Ermolaeva M.D."/>
            <person name="Salzberg S.L."/>
            <person name="Delcher A."/>
            <person name="Utterback T.R."/>
            <person name="Weidman J.F."/>
            <person name="Khouri H.M."/>
            <person name="Gill J."/>
            <person name="Mikula A."/>
            <person name="Bishai W."/>
            <person name="Jacobs W.R. Jr."/>
            <person name="Venter J.C."/>
            <person name="Fraser C.M."/>
        </authorList>
    </citation>
    <scope>NUCLEOTIDE SEQUENCE [LARGE SCALE GENOMIC DNA]</scope>
    <source>
        <strain>CDC 1551 / Oshkosh</strain>
    </source>
</reference>
<sequence>MPRKGPAPKRPLVNDPVYGSQLVTQLVNKVLLKGKKSLAERIVYGALEQARDKTGTDPVITLKRALDNVKPALEVRSRRVGGATYQVPVEVRPDRSTTLALRWLIGYSRQRREKTMIERLANEILDASNGLGASVKRREDTHKMAEANRAFAHYRW</sequence>